<sequence>MEEERRDDYKFLRIQDAFKALHLHVNLIGVIVELGFSNGSDCSCTLKIVDPWYSGSGLPVKFVARTIRDLPRVESIGDIILLSRVKIVLINRKITALCNETTSSSFALFNGKHSVDSIPYQSSPKFLMREQDKNFLSNLREWMITYKFEDGSCCFTSLKDIKEGECSNLSCQIVHISKVYKDRWYLFVWDGTEMPPCNILVKSERLPLCVEPEMLPTYMLRKFPTFGSVLRIIVDRVSEKQAIHCLQPGQHVKLLNLFFQVNMGLWNATFTPSTKMQYTMSREMEAFSPQRMCGEKFSPRWNPIARCISRSHSEITGVAHDDAPFVSLMDILTYHNVTAKFRCVVRFIQVYPRDVRKLRDINGNIKLVAILEDATARIHASLYADEGEKFFGCDESDEEALVKKLNRLLGGEEMEKVPRNPPWVQCCLFSFYKHKMDQWESRRFRIFDTWINAS</sequence>
<gene>
    <name evidence="8" type="primary">POT1B</name>
    <name evidence="7" type="synonym">POT2</name>
    <name type="ordered locus">At5g06310</name>
    <name type="ORF">MHF15</name>
</gene>
<keyword id="KW-0025">Alternative splicing</keyword>
<keyword id="KW-0158">Chromosome</keyword>
<keyword id="KW-0238">DNA-binding</keyword>
<keyword id="KW-0539">Nucleus</keyword>
<keyword id="KW-1185">Reference proteome</keyword>
<keyword id="KW-0694">RNA-binding</keyword>
<keyword id="KW-0779">Telomere</keyword>
<protein>
    <recommendedName>
        <fullName evidence="8">Protection of telomeres protein 1b</fullName>
        <shortName evidence="8">AtPOT1b</shortName>
    </recommendedName>
    <alternativeName>
        <fullName evidence="7">Protection of telomeres protein 2</fullName>
        <shortName evidence="7">AtPot2</shortName>
    </alternativeName>
</protein>
<reference key="1">
    <citation type="journal article" date="2005" name="Genes Genet. Syst.">
        <title>Alternative splicing of Pot1 (Protection of telomere)-like genes in Arabidopsis thaliana.</title>
        <authorList>
            <person name="Tani A."/>
            <person name="Murata M."/>
        </authorList>
    </citation>
    <scope>NUCLEOTIDE SEQUENCE [GENOMIC DNA]</scope>
    <scope>ALTERNATIVE SPLICING (ISOFORMS 1 AND 2)</scope>
    <source>
        <strain>cv. Columbia</strain>
    </source>
</reference>
<reference key="2">
    <citation type="journal article" date="2005" name="Mol. Cell. Biol.">
        <title>The Arabidopsis Pot1 and Pot2 proteins function in telomere length homeostasis and chromosome end protection.</title>
        <authorList>
            <person name="Shakirov E.V."/>
            <person name="Surovtseva Y.V."/>
            <person name="Osbun N."/>
            <person name="Shippen D.E."/>
        </authorList>
    </citation>
    <scope>NUCLEOTIDE SEQUENCE [MRNA] (ISOFORM 1)</scope>
    <scope>FUNCTION</scope>
    <scope>TISSUE SPECIFICITY</scope>
</reference>
<reference key="3">
    <citation type="journal article" date="1997" name="DNA Res.">
        <title>Structural analysis of Arabidopsis thaliana chromosome 5. II. Sequence features of the regions of 1,044,062 bp covered by thirteen physically assigned P1 clones.</title>
        <authorList>
            <person name="Kotani H."/>
            <person name="Nakamura Y."/>
            <person name="Sato S."/>
            <person name="Kaneko T."/>
            <person name="Asamizu E."/>
            <person name="Miyajima N."/>
            <person name="Tabata S."/>
        </authorList>
    </citation>
    <scope>NUCLEOTIDE SEQUENCE [LARGE SCALE GENOMIC DNA]</scope>
    <source>
        <strain>cv. Columbia</strain>
    </source>
</reference>
<reference key="4">
    <citation type="journal article" date="2017" name="Plant J.">
        <title>Araport11: a complete reannotation of the Arabidopsis thaliana reference genome.</title>
        <authorList>
            <person name="Cheng C.Y."/>
            <person name="Krishnakumar V."/>
            <person name="Chan A.P."/>
            <person name="Thibaud-Nissen F."/>
            <person name="Schobel S."/>
            <person name="Town C.D."/>
        </authorList>
    </citation>
    <scope>GENOME REANNOTATION</scope>
    <source>
        <strain>cv. Columbia</strain>
    </source>
</reference>
<reference key="5">
    <citation type="submission" date="2004-04" db="EMBL/GenBank/DDBJ databases">
        <title>Arabidopsis ORF clones.</title>
        <authorList>
            <person name="Shinn P."/>
            <person name="Chen H."/>
            <person name="Cheuk R."/>
            <person name="Kim C.J."/>
            <person name="Carninci P."/>
            <person name="Hayashizaki Y."/>
            <person name="Ishida J."/>
            <person name="Kamiya A."/>
            <person name="Kawai J."/>
            <person name="Narusaka M."/>
            <person name="Sakurai T."/>
            <person name="Satou M."/>
            <person name="Seki M."/>
            <person name="Shinozaki K."/>
            <person name="Ecker J.R."/>
        </authorList>
    </citation>
    <scope>NUCLEOTIDE SEQUENCE [LARGE SCALE MRNA] (ISOFORM 1)</scope>
    <source>
        <strain>cv. Columbia</strain>
    </source>
</reference>
<reference key="6">
    <citation type="submission" date="2005-03" db="EMBL/GenBank/DDBJ databases">
        <title>Large-scale analysis of RIKEN Arabidopsis full-length (RAFL) cDNAs.</title>
        <authorList>
            <person name="Totoki Y."/>
            <person name="Seki M."/>
            <person name="Ishida J."/>
            <person name="Nakajima M."/>
            <person name="Enju A."/>
            <person name="Kamiya A."/>
            <person name="Narusaka M."/>
            <person name="Shin-i T."/>
            <person name="Nakagawa M."/>
            <person name="Sakamoto N."/>
            <person name="Oishi K."/>
            <person name="Kohara Y."/>
            <person name="Kobayashi M."/>
            <person name="Toyoda A."/>
            <person name="Sakaki Y."/>
            <person name="Sakurai T."/>
            <person name="Iida K."/>
            <person name="Akiyama K."/>
            <person name="Satou M."/>
            <person name="Toyoda T."/>
            <person name="Konagaya A."/>
            <person name="Carninci P."/>
            <person name="Kawai J."/>
            <person name="Hayashizaki Y."/>
            <person name="Shinozaki K."/>
        </authorList>
    </citation>
    <scope>NUCLEOTIDE SEQUENCE [LARGE SCALE MRNA] (ISOFORM 1)</scope>
    <source>
        <strain>cv. Columbia</strain>
    </source>
</reference>
<reference key="7">
    <citation type="journal article" date="2004" name="FEBS Lett.">
        <title>Interactions of putative telomere-binding proteins in Arabidopsis thaliana: identification of functional TRF2 homolog in plants.</title>
        <authorList>
            <person name="Kuchar M."/>
            <person name="Fajkus J."/>
        </authorList>
    </citation>
    <scope>INTERACTION WITH TRB1</scope>
</reference>
<reference key="8">
    <citation type="journal article" date="2008" name="FEBS Lett.">
        <title>Mapping of interaction domains of putative telomere-binding proteins AtTRB1 and AtPOT1b from Arabidopsis thaliana.</title>
        <authorList>
            <person name="Schrumpfova P.P."/>
            <person name="Kuchar M."/>
            <person name="Palecek J."/>
            <person name="Fajkus J."/>
        </authorList>
    </citation>
    <scope>INTERACTION WITH TRB1; TRB2 AND TRB3</scope>
</reference>
<reference key="9">
    <citation type="journal article" date="2009" name="Plant J.">
        <title>POT1-independent single-strand telomeric DNA binding activities in Brassicaceae.</title>
        <authorList>
            <person name="Shakirov E.V."/>
            <person name="McKnight T.D."/>
            <person name="Shippen D.E."/>
        </authorList>
    </citation>
    <scope>FUNCTION</scope>
</reference>
<reference key="10">
    <citation type="journal article" date="2012" name="Genes Dev.">
        <title>An alternative telomerase RNA in Arabidopsis modulates enzyme activity in response to DNA damage.</title>
        <authorList>
            <person name="Cifuentes-Rojas C."/>
            <person name="Nelson A.D."/>
            <person name="Boltz K.A."/>
            <person name="Kannan K."/>
            <person name="She X."/>
            <person name="Shippen D.E."/>
        </authorList>
    </citation>
    <scope>FUNCTION</scope>
</reference>
<reference key="11">
    <citation type="journal article" date="2016" name="Nucleic Acids Res.">
        <title>Evolution of Arabidopsis protection of telomeres 1 alters nucleic acid recognition and telomerase regulation.</title>
        <authorList>
            <person name="Arora A."/>
            <person name="Beilstein M.A."/>
            <person name="Shippen D.E."/>
        </authorList>
    </citation>
    <scope>FUNCTION</scope>
    <scope>MUTAGENESIS OF VAL-63</scope>
</reference>
<accession>Q6NKX5</accession>
<accession>Q4W6W7</accession>
<accession>Q9FNH7</accession>
<organism>
    <name type="scientific">Arabidopsis thaliana</name>
    <name type="common">Mouse-ear cress</name>
    <dbReference type="NCBI Taxonomy" id="3702"/>
    <lineage>
        <taxon>Eukaryota</taxon>
        <taxon>Viridiplantae</taxon>
        <taxon>Streptophyta</taxon>
        <taxon>Embryophyta</taxon>
        <taxon>Tracheophyta</taxon>
        <taxon>Spermatophyta</taxon>
        <taxon>Magnoliopsida</taxon>
        <taxon>eudicotyledons</taxon>
        <taxon>Gunneridae</taxon>
        <taxon>Pentapetalae</taxon>
        <taxon>rosids</taxon>
        <taxon>malvids</taxon>
        <taxon>Brassicales</taxon>
        <taxon>Brassicaceae</taxon>
        <taxon>Camelineae</taxon>
        <taxon>Arabidopsis</taxon>
    </lineage>
</organism>
<dbReference type="EMBL" id="AB195820">
    <property type="protein sequence ID" value="BAD99149.1"/>
    <property type="molecule type" value="Genomic_DNA"/>
</dbReference>
<dbReference type="EMBL" id="AB195820">
    <property type="protein sequence ID" value="BAD99150.1"/>
    <property type="molecule type" value="Genomic_DNA"/>
</dbReference>
<dbReference type="EMBL" id="AY884594">
    <property type="protein sequence ID" value="AAX78214.1"/>
    <property type="molecule type" value="mRNA"/>
</dbReference>
<dbReference type="EMBL" id="AB006700">
    <property type="protein sequence ID" value="BAB08953.1"/>
    <property type="status" value="ALT_SEQ"/>
    <property type="molecule type" value="Genomic_DNA"/>
</dbReference>
<dbReference type="EMBL" id="CP002688">
    <property type="protein sequence ID" value="AED91001.1"/>
    <property type="molecule type" value="Genomic_DNA"/>
</dbReference>
<dbReference type="EMBL" id="BT012568">
    <property type="protein sequence ID" value="AAS99712.1"/>
    <property type="molecule type" value="mRNA"/>
</dbReference>
<dbReference type="EMBL" id="AK221379">
    <property type="protein sequence ID" value="BAD94288.1"/>
    <property type="molecule type" value="mRNA"/>
</dbReference>
<dbReference type="RefSeq" id="NP_196249.2">
    <molecule id="Q6NKX5-1"/>
    <property type="nucleotide sequence ID" value="NM_120714.4"/>
</dbReference>
<dbReference type="SMR" id="Q6NKX5"/>
<dbReference type="FunCoup" id="Q6NKX5">
    <property type="interactions" value="92"/>
</dbReference>
<dbReference type="IntAct" id="Q6NKX5">
    <property type="interactions" value="3"/>
</dbReference>
<dbReference type="MINT" id="Q6NKX5"/>
<dbReference type="STRING" id="3702.Q6NKX5"/>
<dbReference type="PaxDb" id="3702-AT5G06310.1"/>
<dbReference type="ProteomicsDB" id="249396">
    <molecule id="Q6NKX5-1"/>
</dbReference>
<dbReference type="EnsemblPlants" id="AT5G06310.1">
    <molecule id="Q6NKX5-1"/>
    <property type="protein sequence ID" value="AT5G06310.1"/>
    <property type="gene ID" value="AT5G06310"/>
</dbReference>
<dbReference type="Gramene" id="AT5G06310.1">
    <molecule id="Q6NKX5-1"/>
    <property type="protein sequence ID" value="AT5G06310.1"/>
    <property type="gene ID" value="AT5G06310"/>
</dbReference>
<dbReference type="KEGG" id="ath:AT5G06310"/>
<dbReference type="Araport" id="AT5G06310"/>
<dbReference type="TAIR" id="AT5G06310">
    <property type="gene designation" value="ATPOT1B"/>
</dbReference>
<dbReference type="eggNOG" id="KOG4757">
    <property type="taxonomic scope" value="Eukaryota"/>
</dbReference>
<dbReference type="HOGENOM" id="CLU_020958_0_1_1"/>
<dbReference type="InParanoid" id="Q6NKX5"/>
<dbReference type="OMA" id="WNPIARC"/>
<dbReference type="OrthoDB" id="2186770at2759"/>
<dbReference type="PhylomeDB" id="Q6NKX5"/>
<dbReference type="PRO" id="PR:Q6NKX5"/>
<dbReference type="Proteomes" id="UP000006548">
    <property type="component" value="Chromosome 5"/>
</dbReference>
<dbReference type="ExpressionAtlas" id="Q6NKX5">
    <property type="expression patterns" value="baseline and differential"/>
</dbReference>
<dbReference type="GO" id="GO:0000781">
    <property type="term" value="C:chromosome, telomeric region"/>
    <property type="evidence" value="ECO:0007669"/>
    <property type="project" value="UniProtKB-SubCell"/>
</dbReference>
<dbReference type="GO" id="GO:0005634">
    <property type="term" value="C:nucleus"/>
    <property type="evidence" value="ECO:0007669"/>
    <property type="project" value="UniProtKB-SubCell"/>
</dbReference>
<dbReference type="GO" id="GO:0003723">
    <property type="term" value="F:RNA binding"/>
    <property type="evidence" value="ECO:0000314"/>
    <property type="project" value="TAIR"/>
</dbReference>
<dbReference type="GO" id="GO:0043047">
    <property type="term" value="F:single-stranded telomeric DNA binding"/>
    <property type="evidence" value="ECO:0000304"/>
    <property type="project" value="UniProtKB"/>
</dbReference>
<dbReference type="GO" id="GO:0016233">
    <property type="term" value="P:telomere capping"/>
    <property type="evidence" value="ECO:0000315"/>
    <property type="project" value="UniProtKB"/>
</dbReference>
<dbReference type="GO" id="GO:0000723">
    <property type="term" value="P:telomere maintenance"/>
    <property type="evidence" value="ECO:0000315"/>
    <property type="project" value="UniProtKB"/>
</dbReference>
<dbReference type="CDD" id="cd04497">
    <property type="entry name" value="hPOT1_OB1_like"/>
    <property type="match status" value="1"/>
</dbReference>
<dbReference type="FunFam" id="2.40.50.140:FF:000119">
    <property type="entry name" value="Protection of telomeres 1 homolog"/>
    <property type="match status" value="1"/>
</dbReference>
<dbReference type="FunFam" id="2.40.50.140:FF:000620">
    <property type="entry name" value="Protection of telomeres 1b protein"/>
    <property type="match status" value="1"/>
</dbReference>
<dbReference type="Gene3D" id="2.40.50.140">
    <property type="entry name" value="Nucleic acid-binding proteins"/>
    <property type="match status" value="2"/>
</dbReference>
<dbReference type="InterPro" id="IPR012340">
    <property type="entry name" value="NA-bd_OB-fold"/>
</dbReference>
<dbReference type="InterPro" id="IPR028389">
    <property type="entry name" value="POT1"/>
</dbReference>
<dbReference type="InterPro" id="IPR011564">
    <property type="entry name" value="Telomer_end-bd_POT1/Cdc13"/>
</dbReference>
<dbReference type="PANTHER" id="PTHR14513">
    <property type="entry name" value="PROTECTION OF TELOMERES 1"/>
    <property type="match status" value="1"/>
</dbReference>
<dbReference type="PANTHER" id="PTHR14513:SF6">
    <property type="entry name" value="PROTECTION OF TELOMERES PROTEIN 1B"/>
    <property type="match status" value="1"/>
</dbReference>
<dbReference type="Pfam" id="PF25507">
    <property type="entry name" value="OB_POT1A"/>
    <property type="match status" value="1"/>
</dbReference>
<dbReference type="Pfam" id="PF02765">
    <property type="entry name" value="POT1"/>
    <property type="match status" value="1"/>
</dbReference>
<dbReference type="SMART" id="SM00976">
    <property type="entry name" value="Telo_bind"/>
    <property type="match status" value="1"/>
</dbReference>
<dbReference type="SUPFAM" id="SSF50249">
    <property type="entry name" value="Nucleic acid-binding proteins"/>
    <property type="match status" value="2"/>
</dbReference>
<name>POT1B_ARATH</name>
<proteinExistence type="evidence at protein level"/>
<comment type="function">
    <text evidence="3 5 6">Negatively regulates telomerase activity and participates in chromosome end protection (PubMed:16107718, PubMed:23109676). Binds RNA non-specifically (PubMed:27651456). Associates with a regulatory Pol III-dependent lncRNA, which represses telomerase activity in response to DNA damage (PubMed:23109676). Binds single-stranded telomeric DNA with weak affinity (PubMed:16107718, PubMed:27651456).</text>
</comment>
<comment type="subunit">
    <text evidence="2 4">Interacts with TRB1, TRB2 and TRB3.</text>
</comment>
<comment type="interaction">
    <interactant intactId="EBI-476223">
        <id>Q6NKX5</id>
    </interactant>
    <interactant intactId="EBI-476101">
        <id>Q8VWK4</id>
        <label>TRB1</label>
    </interactant>
    <organismsDiffer>false</organismsDiffer>
    <experiments>4</experiments>
</comment>
<comment type="subcellular location">
    <subcellularLocation>
        <location evidence="1">Nucleus</location>
    </subcellularLocation>
    <subcellularLocation>
        <location evidence="1">Chromosome</location>
        <location evidence="1">Telomere</location>
    </subcellularLocation>
</comment>
<comment type="alternative products">
    <event type="alternative splicing"/>
    <isoform>
        <id>Q6NKX5-1</id>
        <name>1</name>
        <sequence type="displayed"/>
    </isoform>
    <isoform>
        <id>Q6NKX5-2</id>
        <name>2</name>
        <sequence type="described" ref="VSP_043060 VSP_043061"/>
    </isoform>
</comment>
<comment type="tissue specificity">
    <text evidence="3">Expressed at low levels in roots, rosette leaves, cauline leaves, stems and flowers.</text>
</comment>
<comment type="similarity">
    <text evidence="9">Belongs to the telombin family.</text>
</comment>
<comment type="sequence caution" evidence="9">
    <conflict type="erroneous gene model prediction">
        <sequence resource="EMBL-CDS" id="BAB08953"/>
    </conflict>
</comment>
<feature type="chain" id="PRO_0000416958" description="Protection of telomeres protein 1b">
    <location>
        <begin position="1"/>
        <end position="454"/>
    </location>
</feature>
<feature type="splice variant" id="VSP_043060" description="In isoform 2." evidence="9">
    <original>SCCFTSLKDIKEGECSNLSCQIVHISKV</original>
    <variation>NYDAISFLMNSTYSLKSLYANVCFVLYL</variation>
    <location>
        <begin position="152"/>
        <end position="179"/>
    </location>
</feature>
<feature type="splice variant" id="VSP_043061" description="In isoform 2." evidence="9">
    <location>
        <begin position="180"/>
        <end position="454"/>
    </location>
</feature>
<feature type="mutagenesis site" description="Binds specifically single-stranded telomeric DNA." evidence="6">
    <original>V</original>
    <variation>A</variation>
    <location>
        <position position="63"/>
    </location>
</feature>
<evidence type="ECO:0000250" key="1"/>
<evidence type="ECO:0000269" key="2">
    <source>
    </source>
</evidence>
<evidence type="ECO:0000269" key="3">
    <source>
    </source>
</evidence>
<evidence type="ECO:0000269" key="4">
    <source>
    </source>
</evidence>
<evidence type="ECO:0000269" key="5">
    <source>
    </source>
</evidence>
<evidence type="ECO:0000269" key="6">
    <source>
    </source>
</evidence>
<evidence type="ECO:0000303" key="7">
    <source>
    </source>
</evidence>
<evidence type="ECO:0000303" key="8">
    <source>
    </source>
</evidence>
<evidence type="ECO:0000305" key="9"/>